<evidence type="ECO:0000255" key="1">
    <source>
        <dbReference type="HAMAP-Rule" id="MF_00068"/>
    </source>
</evidence>
<gene>
    <name evidence="1" type="primary">murQ</name>
    <name type="ordered locus">VS_0544</name>
</gene>
<sequence length="306" mass="32270">MSNDALISALSHLVSEGRNPDTMDIDLLTSLEVVEKINQQDKQVPLAIEAELPQIAKAVDKIAQAFQNGGRLIYMGAGTSGRLGVLDASECPPTFGVSDKMVIGLIAGGPEAILKAKEGAEDSLTLGIEDLKAIQFSENDVVVGIAASGRTPYVIGALNYANQLGAVTVALSCNPDSPIAEIAQIAISPVVGPEALTGSTRLKSGTAQKLVLNMLTTASMIRIGKSYQNLMVDVKATNEKLVARAARIVIQATECEKALAVSTLKATDYDVKLSILMILTGLDLELAKAQLDKQNGFLRKAVENNQ</sequence>
<protein>
    <recommendedName>
        <fullName evidence="1">N-acetylmuramic acid 6-phosphate etherase</fullName>
        <shortName evidence="1">MurNAc-6-P etherase</shortName>
        <ecNumber evidence="1">4.2.1.126</ecNumber>
    </recommendedName>
    <alternativeName>
        <fullName evidence="1">N-acetylmuramic acid 6-phosphate hydrolase</fullName>
    </alternativeName>
    <alternativeName>
        <fullName evidence="1">N-acetylmuramic acid 6-phosphate lyase</fullName>
    </alternativeName>
</protein>
<dbReference type="EC" id="4.2.1.126" evidence="1"/>
<dbReference type="EMBL" id="FM954972">
    <property type="protein sequence ID" value="CAV17549.1"/>
    <property type="molecule type" value="Genomic_DNA"/>
</dbReference>
<dbReference type="SMR" id="B7VJM5"/>
<dbReference type="STRING" id="575788.VS_0544"/>
<dbReference type="KEGG" id="vsp:VS_0544"/>
<dbReference type="PATRIC" id="fig|575788.5.peg.1908"/>
<dbReference type="eggNOG" id="COG2103">
    <property type="taxonomic scope" value="Bacteria"/>
</dbReference>
<dbReference type="HOGENOM" id="CLU_049049_1_1_6"/>
<dbReference type="UniPathway" id="UPA00342"/>
<dbReference type="UniPathway" id="UPA00343"/>
<dbReference type="UniPathway" id="UPA00544"/>
<dbReference type="Proteomes" id="UP000009100">
    <property type="component" value="Chromosome 1"/>
</dbReference>
<dbReference type="GO" id="GO:0097367">
    <property type="term" value="F:carbohydrate derivative binding"/>
    <property type="evidence" value="ECO:0007669"/>
    <property type="project" value="InterPro"/>
</dbReference>
<dbReference type="GO" id="GO:0016835">
    <property type="term" value="F:carbon-oxygen lyase activity"/>
    <property type="evidence" value="ECO:0007669"/>
    <property type="project" value="UniProtKB-UniRule"/>
</dbReference>
<dbReference type="GO" id="GO:0016803">
    <property type="term" value="F:ether hydrolase activity"/>
    <property type="evidence" value="ECO:0007669"/>
    <property type="project" value="TreeGrafter"/>
</dbReference>
<dbReference type="GO" id="GO:0097175">
    <property type="term" value="P:1,6-anhydro-N-acetyl-beta-muramic acid catabolic process"/>
    <property type="evidence" value="ECO:0007669"/>
    <property type="project" value="UniProtKB-UniRule"/>
</dbReference>
<dbReference type="GO" id="GO:0046348">
    <property type="term" value="P:amino sugar catabolic process"/>
    <property type="evidence" value="ECO:0007669"/>
    <property type="project" value="InterPro"/>
</dbReference>
<dbReference type="GO" id="GO:0097173">
    <property type="term" value="P:N-acetylmuramic acid catabolic process"/>
    <property type="evidence" value="ECO:0007669"/>
    <property type="project" value="UniProtKB-UniPathway"/>
</dbReference>
<dbReference type="GO" id="GO:0009254">
    <property type="term" value="P:peptidoglycan turnover"/>
    <property type="evidence" value="ECO:0007669"/>
    <property type="project" value="UniProtKB-UniRule"/>
</dbReference>
<dbReference type="CDD" id="cd05007">
    <property type="entry name" value="SIS_Etherase"/>
    <property type="match status" value="1"/>
</dbReference>
<dbReference type="FunFam" id="1.10.8.1080:FF:000001">
    <property type="entry name" value="N-acetylmuramic acid 6-phosphate etherase"/>
    <property type="match status" value="1"/>
</dbReference>
<dbReference type="FunFam" id="3.40.50.10490:FF:000014">
    <property type="entry name" value="N-acetylmuramic acid 6-phosphate etherase"/>
    <property type="match status" value="1"/>
</dbReference>
<dbReference type="Gene3D" id="1.10.8.1080">
    <property type="match status" value="1"/>
</dbReference>
<dbReference type="Gene3D" id="3.40.50.10490">
    <property type="entry name" value="Glucose-6-phosphate isomerase like protein, domain 1"/>
    <property type="match status" value="1"/>
</dbReference>
<dbReference type="HAMAP" id="MF_00068">
    <property type="entry name" value="MurQ"/>
    <property type="match status" value="1"/>
</dbReference>
<dbReference type="InterPro" id="IPR005488">
    <property type="entry name" value="Etherase_MurQ"/>
</dbReference>
<dbReference type="InterPro" id="IPR005486">
    <property type="entry name" value="Glucokinase_regulatory_CS"/>
</dbReference>
<dbReference type="InterPro" id="IPR040190">
    <property type="entry name" value="MURQ/GCKR"/>
</dbReference>
<dbReference type="InterPro" id="IPR001347">
    <property type="entry name" value="SIS_dom"/>
</dbReference>
<dbReference type="InterPro" id="IPR046348">
    <property type="entry name" value="SIS_dom_sf"/>
</dbReference>
<dbReference type="NCBIfam" id="TIGR00274">
    <property type="entry name" value="N-acetylmuramic acid 6-phosphate etherase"/>
    <property type="match status" value="1"/>
</dbReference>
<dbReference type="NCBIfam" id="NF003915">
    <property type="entry name" value="PRK05441.1"/>
    <property type="match status" value="1"/>
</dbReference>
<dbReference type="NCBIfam" id="NF009222">
    <property type="entry name" value="PRK12570.1"/>
    <property type="match status" value="1"/>
</dbReference>
<dbReference type="PANTHER" id="PTHR10088">
    <property type="entry name" value="GLUCOKINASE REGULATORY PROTEIN"/>
    <property type="match status" value="1"/>
</dbReference>
<dbReference type="PANTHER" id="PTHR10088:SF4">
    <property type="entry name" value="GLUCOKINASE REGULATORY PROTEIN"/>
    <property type="match status" value="1"/>
</dbReference>
<dbReference type="Pfam" id="PF22645">
    <property type="entry name" value="GKRP_SIS_N"/>
    <property type="match status" value="1"/>
</dbReference>
<dbReference type="SUPFAM" id="SSF53697">
    <property type="entry name" value="SIS domain"/>
    <property type="match status" value="1"/>
</dbReference>
<dbReference type="PROSITE" id="PS01272">
    <property type="entry name" value="GCKR"/>
    <property type="match status" value="1"/>
</dbReference>
<dbReference type="PROSITE" id="PS51464">
    <property type="entry name" value="SIS"/>
    <property type="match status" value="1"/>
</dbReference>
<keyword id="KW-0119">Carbohydrate metabolism</keyword>
<keyword id="KW-0456">Lyase</keyword>
<name>MURQ_VIBA3</name>
<comment type="function">
    <text evidence="1">Specifically catalyzes the cleavage of the D-lactyl ether substituent of MurNAc 6-phosphate, producing GlcNAc 6-phosphate and D-lactate. Together with AnmK, is also required for the utilization of anhydro-N-acetylmuramic acid (anhMurNAc) either imported from the medium or derived from its own cell wall murein, and thus plays a role in cell wall recycling.</text>
</comment>
<comment type="catalytic activity">
    <reaction evidence="1">
        <text>N-acetyl-D-muramate 6-phosphate + H2O = N-acetyl-D-glucosamine 6-phosphate + (R)-lactate</text>
        <dbReference type="Rhea" id="RHEA:26410"/>
        <dbReference type="ChEBI" id="CHEBI:15377"/>
        <dbReference type="ChEBI" id="CHEBI:16004"/>
        <dbReference type="ChEBI" id="CHEBI:57513"/>
        <dbReference type="ChEBI" id="CHEBI:58722"/>
        <dbReference type="EC" id="4.2.1.126"/>
    </reaction>
</comment>
<comment type="pathway">
    <text evidence="1">Amino-sugar metabolism; 1,6-anhydro-N-acetylmuramate degradation.</text>
</comment>
<comment type="pathway">
    <text evidence="1">Amino-sugar metabolism; N-acetylmuramate degradation.</text>
</comment>
<comment type="pathway">
    <text evidence="1">Cell wall biogenesis; peptidoglycan recycling.</text>
</comment>
<comment type="subunit">
    <text evidence="1">Homodimer.</text>
</comment>
<comment type="miscellaneous">
    <text evidence="1">A lyase-type mechanism (elimination/hydration) is suggested for the cleavage of the lactyl ether bond of MurNAc 6-phosphate, with the formation of an alpha,beta-unsaturated aldehyde intermediate with (E)-stereochemistry, followed by the syn addition of water to give product.</text>
</comment>
<comment type="similarity">
    <text evidence="1">Belongs to the GCKR-like family. MurNAc-6-P etherase subfamily.</text>
</comment>
<reference key="1">
    <citation type="submission" date="2009-02" db="EMBL/GenBank/DDBJ databases">
        <title>Vibrio splendidus str. LGP32 complete genome.</title>
        <authorList>
            <person name="Mazel D."/>
            <person name="Le Roux F."/>
        </authorList>
    </citation>
    <scope>NUCLEOTIDE SEQUENCE [LARGE SCALE GENOMIC DNA]</scope>
    <source>
        <strain>LGP32</strain>
    </source>
</reference>
<proteinExistence type="inferred from homology"/>
<accession>B7VJM5</accession>
<organism>
    <name type="scientific">Vibrio atlanticus (strain LGP32)</name>
    <name type="common">Vibrio splendidus (strain Mel32)</name>
    <dbReference type="NCBI Taxonomy" id="575788"/>
    <lineage>
        <taxon>Bacteria</taxon>
        <taxon>Pseudomonadati</taxon>
        <taxon>Pseudomonadota</taxon>
        <taxon>Gammaproteobacteria</taxon>
        <taxon>Vibrionales</taxon>
        <taxon>Vibrionaceae</taxon>
        <taxon>Vibrio</taxon>
    </lineage>
</organism>
<feature type="chain" id="PRO_1000118015" description="N-acetylmuramic acid 6-phosphate etherase">
    <location>
        <begin position="1"/>
        <end position="306"/>
    </location>
</feature>
<feature type="domain" description="SIS" evidence="1">
    <location>
        <begin position="62"/>
        <end position="225"/>
    </location>
</feature>
<feature type="active site" description="Proton donor" evidence="1">
    <location>
        <position position="90"/>
    </location>
</feature>
<feature type="active site" evidence="1">
    <location>
        <position position="121"/>
    </location>
</feature>